<protein>
    <recommendedName>
        <fullName evidence="1">UPF0291 protein SPJ_1373</fullName>
    </recommendedName>
</protein>
<reference key="1">
    <citation type="journal article" date="2010" name="Genome Biol.">
        <title>Structure and dynamics of the pan-genome of Streptococcus pneumoniae and closely related species.</title>
        <authorList>
            <person name="Donati C."/>
            <person name="Hiller N.L."/>
            <person name="Tettelin H."/>
            <person name="Muzzi A."/>
            <person name="Croucher N.J."/>
            <person name="Angiuoli S.V."/>
            <person name="Oggioni M."/>
            <person name="Dunning Hotopp J.C."/>
            <person name="Hu F.Z."/>
            <person name="Riley D.R."/>
            <person name="Covacci A."/>
            <person name="Mitchell T.J."/>
            <person name="Bentley S.D."/>
            <person name="Kilian M."/>
            <person name="Ehrlich G.D."/>
            <person name="Rappuoli R."/>
            <person name="Moxon E.R."/>
            <person name="Masignani V."/>
        </authorList>
    </citation>
    <scope>NUCLEOTIDE SEQUENCE [LARGE SCALE GENOMIC DNA]</scope>
    <source>
        <strain>JJA</strain>
    </source>
</reference>
<gene>
    <name type="ordered locus">SPJ_1373</name>
</gene>
<organism>
    <name type="scientific">Streptococcus pneumoniae (strain JJA)</name>
    <dbReference type="NCBI Taxonomy" id="488222"/>
    <lineage>
        <taxon>Bacteria</taxon>
        <taxon>Bacillati</taxon>
        <taxon>Bacillota</taxon>
        <taxon>Bacilli</taxon>
        <taxon>Lactobacillales</taxon>
        <taxon>Streptococcaceae</taxon>
        <taxon>Streptococcus</taxon>
    </lineage>
</organism>
<keyword id="KW-0963">Cytoplasm</keyword>
<sequence>MDPKKIARINELAKKKKTEGLTPEEKVEQAKLREEYIEGYRRAVRHHIEGIKIVDEEGNDVTPEKLRQVQREKGLHGRSLDDPNS</sequence>
<evidence type="ECO:0000255" key="1">
    <source>
        <dbReference type="HAMAP-Rule" id="MF_01103"/>
    </source>
</evidence>
<evidence type="ECO:0000256" key="2">
    <source>
        <dbReference type="SAM" id="MobiDB-lite"/>
    </source>
</evidence>
<comment type="subcellular location">
    <subcellularLocation>
        <location evidence="1">Cytoplasm</location>
    </subcellularLocation>
</comment>
<comment type="similarity">
    <text evidence="1">Belongs to the UPF0291 family.</text>
</comment>
<accession>C1CF56</accession>
<name>Y1373_STRZJ</name>
<dbReference type="EMBL" id="CP000919">
    <property type="protein sequence ID" value="ACO18981.1"/>
    <property type="molecule type" value="Genomic_DNA"/>
</dbReference>
<dbReference type="RefSeq" id="WP_000371287.1">
    <property type="nucleotide sequence ID" value="NC_012466.1"/>
</dbReference>
<dbReference type="SMR" id="C1CF56"/>
<dbReference type="KEGG" id="sjj:SPJ_1373"/>
<dbReference type="HOGENOM" id="CLU_173137_0_2_9"/>
<dbReference type="Proteomes" id="UP000002206">
    <property type="component" value="Chromosome"/>
</dbReference>
<dbReference type="GO" id="GO:0005737">
    <property type="term" value="C:cytoplasm"/>
    <property type="evidence" value="ECO:0007669"/>
    <property type="project" value="UniProtKB-SubCell"/>
</dbReference>
<dbReference type="Gene3D" id="1.10.287.540">
    <property type="entry name" value="Helix hairpin bin"/>
    <property type="match status" value="1"/>
</dbReference>
<dbReference type="HAMAP" id="MF_01103">
    <property type="entry name" value="UPF0291"/>
    <property type="match status" value="1"/>
</dbReference>
<dbReference type="InterPro" id="IPR009242">
    <property type="entry name" value="DUF896"/>
</dbReference>
<dbReference type="NCBIfam" id="NF002711">
    <property type="entry name" value="PRK02539.1"/>
    <property type="match status" value="1"/>
</dbReference>
<dbReference type="PANTHER" id="PTHR37300">
    <property type="entry name" value="UPF0291 PROTEIN CBO2609/CLC_2481"/>
    <property type="match status" value="1"/>
</dbReference>
<dbReference type="PANTHER" id="PTHR37300:SF1">
    <property type="entry name" value="UPF0291 PROTEIN YNZC"/>
    <property type="match status" value="1"/>
</dbReference>
<dbReference type="Pfam" id="PF05979">
    <property type="entry name" value="DUF896"/>
    <property type="match status" value="1"/>
</dbReference>
<dbReference type="SUPFAM" id="SSF158221">
    <property type="entry name" value="YnzC-like"/>
    <property type="match status" value="1"/>
</dbReference>
<feature type="chain" id="PRO_1000180980" description="UPF0291 protein SPJ_1373">
    <location>
        <begin position="1"/>
        <end position="85"/>
    </location>
</feature>
<feature type="region of interest" description="Disordered" evidence="2">
    <location>
        <begin position="62"/>
        <end position="85"/>
    </location>
</feature>
<proteinExistence type="inferred from homology"/>